<proteinExistence type="predicted"/>
<feature type="chain" id="PRO_0000196792" description="Uncharacterized mitochondrial protein AtMg00810">
    <location>
        <begin position="1"/>
        <end position="240"/>
    </location>
</feature>
<feature type="sequence conflict" description="In Ref. 3; AAM15418." evidence="1" ref="3">
    <original>R</original>
    <variation>C</variation>
    <location>
        <position position="101"/>
    </location>
</feature>
<reference key="1">
    <citation type="journal article" date="1997" name="Nat. Genet.">
        <title>The mitochondrial genome of Arabidopsis thaliana contains 57 genes in 366,924 nucleotides.</title>
        <authorList>
            <person name="Unseld M."/>
            <person name="Marienfeld J.R."/>
            <person name="Brandt P."/>
            <person name="Brennicke A."/>
        </authorList>
    </citation>
    <scope>NUCLEOTIDE SEQUENCE [LARGE SCALE GENOMIC DNA]</scope>
    <source>
        <strain>cv. C24</strain>
    </source>
</reference>
<reference key="2">
    <citation type="journal article" date="2018" name="Plant Cell">
        <title>Correction of persistent errors in Arabidopsis reference mitochondrial genomes.</title>
        <authorList>
            <person name="Sloan D.B."/>
            <person name="Wu Z."/>
            <person name="Sharbrough J."/>
        </authorList>
    </citation>
    <scope>NUCLEOTIDE SEQUENCE [LARGE SCALE GENOMIC DNA]</scope>
    <source>
        <strain>cv. Columbia</strain>
    </source>
</reference>
<reference key="3">
    <citation type="journal article" date="1999" name="Nature">
        <title>Sequence and analysis of chromosome 2 of the plant Arabidopsis thaliana.</title>
        <authorList>
            <person name="Lin X."/>
            <person name="Kaul S."/>
            <person name="Rounsley S.D."/>
            <person name="Shea T.P."/>
            <person name="Benito M.-I."/>
            <person name="Town C.D."/>
            <person name="Fujii C.Y."/>
            <person name="Mason T.M."/>
            <person name="Bowman C.L."/>
            <person name="Barnstead M.E."/>
            <person name="Feldblyum T.V."/>
            <person name="Buell C.R."/>
            <person name="Ketchum K.A."/>
            <person name="Lee J.J."/>
            <person name="Ronning C.M."/>
            <person name="Koo H.L."/>
            <person name="Moffat K.S."/>
            <person name="Cronin L.A."/>
            <person name="Shen M."/>
            <person name="Pai G."/>
            <person name="Van Aken S."/>
            <person name="Umayam L."/>
            <person name="Tallon L.J."/>
            <person name="Gill J.E."/>
            <person name="Adams M.D."/>
            <person name="Carrera A.J."/>
            <person name="Creasy T.H."/>
            <person name="Goodman H.M."/>
            <person name="Somerville C.R."/>
            <person name="Copenhaver G.P."/>
            <person name="Preuss D."/>
            <person name="Nierman W.C."/>
            <person name="White O."/>
            <person name="Eisen J.A."/>
            <person name="Salzberg S.L."/>
            <person name="Fraser C.M."/>
            <person name="Venter J.C."/>
        </authorList>
    </citation>
    <scope>NUCLEOTIDE SEQUENCE [LARGE SCALE GENOMIC DNA] (AT2G07683)</scope>
    <source>
        <strain>cv. Columbia</strain>
    </source>
</reference>
<reference key="4">
    <citation type="journal article" date="2017" name="Plant J.">
        <title>Araport11: a complete reannotation of the Arabidopsis thaliana reference genome.</title>
        <authorList>
            <person name="Cheng C.Y."/>
            <person name="Krishnakumar V."/>
            <person name="Chan A.P."/>
            <person name="Thibaud-Nissen F."/>
            <person name="Schobel S."/>
            <person name="Town C.D."/>
        </authorList>
    </citation>
    <scope>GENOME REANNOTATION (AT2G07683)</scope>
    <source>
        <strain>cv. Columbia</strain>
    </source>
</reference>
<protein>
    <recommendedName>
        <fullName>Uncharacterized mitochondrial protein AtMg00810</fullName>
    </recommendedName>
    <alternativeName>
        <fullName>ORF240b</fullName>
    </alternativeName>
</protein>
<comment type="subcellular location">
    <subcellularLocation>
        <location evidence="1">Mitochondrion</location>
    </subcellularLocation>
</comment>
<comment type="miscellaneous">
    <text>A stretch of 270 kb of the mitochondrial genome is duplicated within the centromere of chromosome 2 resulting in the duplication of the gene. The expression of this duplicated gene (At2g07683) is not demonstrated.</text>
</comment>
<comment type="sequence caution" evidence="1">
    <conflict type="erroneous gene model prediction">
        <sequence resource="EMBL-CDS" id="AAM15418"/>
    </conflict>
</comment>
<comment type="sequence caution" evidence="1">
    <conflict type="erroneous gene model prediction">
        <sequence resource="EMBL-CDS" id="AAM15511"/>
    </conflict>
</comment>
<evidence type="ECO:0000305" key="1"/>
<evidence type="ECO:0000312" key="2">
    <source>
        <dbReference type="Araport" id="AT2G07683"/>
    </source>
</evidence>
<evidence type="ECO:0000312" key="3">
    <source>
        <dbReference type="Araport" id="ATMG00810"/>
    </source>
</evidence>
<accession>P92519</accession>
<accession>Q1ZXZ4</accession>
<accession>Q8S884</accession>
<accession>Q8S8B8</accession>
<geneLocation type="mitochondrion"/>
<sequence>MYLLLYVDDILLTGSSNTLLNMLIFQLSSTFSMKDLGPVHYFLGIQIKTHPSGLFLSQTKYAEQILNNAGMLDCKPMSTPLPLKLNSSVSTAKYPDPSDFRSIVGALQYLTLTRPDISYAVNIVCQRMHEPTLADFDLLKRVLRYVKGTIFHGLYIHKNSKLNVQAFCDSDWAGCTSTRRSTTGFCTFLGCNIISWSAKRQPTVSRSSTETEYRALALTAAELTWSSASRSRDPSAMNTN</sequence>
<gene>
    <name evidence="3" type="ordered locus">AtMg00810</name>
</gene>
<gene>
    <name evidence="2" type="ordered locus">At2g07683</name>
</gene>
<name>M810_ARATH</name>
<keyword id="KW-0496">Mitochondrion</keyword>
<keyword id="KW-1185">Reference proteome</keyword>
<organism>
    <name type="scientific">Arabidopsis thaliana</name>
    <name type="common">Mouse-ear cress</name>
    <dbReference type="NCBI Taxonomy" id="3702"/>
    <lineage>
        <taxon>Eukaryota</taxon>
        <taxon>Viridiplantae</taxon>
        <taxon>Streptophyta</taxon>
        <taxon>Embryophyta</taxon>
        <taxon>Tracheophyta</taxon>
        <taxon>Spermatophyta</taxon>
        <taxon>Magnoliopsida</taxon>
        <taxon>eudicotyledons</taxon>
        <taxon>Gunneridae</taxon>
        <taxon>Pentapetalae</taxon>
        <taxon>rosids</taxon>
        <taxon>malvids</taxon>
        <taxon>Brassicales</taxon>
        <taxon>Brassicaceae</taxon>
        <taxon>Camelineae</taxon>
        <taxon>Arabidopsis</taxon>
    </lineage>
</organism>
<dbReference type="EMBL" id="Y08501">
    <property type="protein sequence ID" value="CAA69823.1"/>
    <property type="molecule type" value="Genomic_DNA"/>
</dbReference>
<dbReference type="EMBL" id="BK010421">
    <property type="status" value="NOT_ANNOTATED_CDS"/>
    <property type="molecule type" value="Genomic_DNA"/>
</dbReference>
<dbReference type="EMBL" id="AC007143">
    <property type="protein sequence ID" value="AAM15418.1"/>
    <property type="status" value="ALT_SEQ"/>
    <property type="molecule type" value="Genomic_DNA"/>
</dbReference>
<dbReference type="EMBL" id="AC007730">
    <property type="protein sequence ID" value="AAM15511.1"/>
    <property type="status" value="ALT_SEQ"/>
    <property type="molecule type" value="Genomic_DNA"/>
</dbReference>
<dbReference type="EMBL" id="CP002685">
    <property type="status" value="NOT_ANNOTATED_CDS"/>
    <property type="molecule type" value="Genomic_DNA"/>
</dbReference>
<dbReference type="RefSeq" id="NP_085537.1">
    <property type="nucleotide sequence ID" value="NC_001284.2"/>
</dbReference>
<dbReference type="STRING" id="3702.P92519"/>
<dbReference type="PaxDb" id="3702-ATMG00810.1"/>
<dbReference type="EnsemblPlants" id="ATMG00810.1">
    <property type="protein sequence ID" value="ATMG00810.1"/>
    <property type="gene ID" value="ATMG00810"/>
</dbReference>
<dbReference type="Gramene" id="ATMG00810.1">
    <property type="protein sequence ID" value="ATMG00810.1"/>
    <property type="gene ID" value="ATMG00810"/>
</dbReference>
<dbReference type="Araport" id="AT2G07683"/>
<dbReference type="Araport" id="ATMG00810"/>
<dbReference type="TAIR" id="AT2G07683"/>
<dbReference type="TAIR" id="ATMG00810">
    <property type="gene designation" value="ORF240B"/>
</dbReference>
<dbReference type="eggNOG" id="KOG0017">
    <property type="taxonomic scope" value="Eukaryota"/>
</dbReference>
<dbReference type="HOGENOM" id="CLU_001650_8_0_1"/>
<dbReference type="InParanoid" id="P92519"/>
<dbReference type="OMA" id="MHAPTIS"/>
<dbReference type="Proteomes" id="UP000006548">
    <property type="component" value="Chromosome 2"/>
</dbReference>
<dbReference type="Proteomes" id="UP000006548">
    <property type="component" value="Mitochondrion MT"/>
</dbReference>
<dbReference type="ExpressionAtlas" id="P92519">
    <property type="expression patterns" value="baseline and differential"/>
</dbReference>
<dbReference type="GO" id="GO:0005739">
    <property type="term" value="C:mitochondrion"/>
    <property type="evidence" value="ECO:0007669"/>
    <property type="project" value="UniProtKB-SubCell"/>
</dbReference>
<dbReference type="CDD" id="cd09272">
    <property type="entry name" value="RNase_HI_RT_Ty1"/>
    <property type="match status" value="1"/>
</dbReference>
<dbReference type="InterPro" id="IPR043502">
    <property type="entry name" value="DNA/RNA_pol_sf"/>
</dbReference>
<dbReference type="InterPro" id="IPR013103">
    <property type="entry name" value="RVT_2"/>
</dbReference>
<dbReference type="PANTHER" id="PTHR11439">
    <property type="entry name" value="GAG-POL-RELATED RETROTRANSPOSON"/>
    <property type="match status" value="1"/>
</dbReference>
<dbReference type="PANTHER" id="PTHR11439:SF524">
    <property type="entry name" value="RNA-DIRECTED DNA POLYMERASE, PROTEIN KINASE RLK-PELLE-DLSV FAMILY"/>
    <property type="match status" value="1"/>
</dbReference>
<dbReference type="Pfam" id="PF07727">
    <property type="entry name" value="RVT_2"/>
    <property type="match status" value="1"/>
</dbReference>
<dbReference type="SUPFAM" id="SSF56672">
    <property type="entry name" value="DNA/RNA polymerases"/>
    <property type="match status" value="1"/>
</dbReference>